<feature type="initiator methionine" description="Removed" evidence="2">
    <location>
        <position position="1"/>
    </location>
</feature>
<feature type="chain" id="PRO_0000247991" description="MKI67 FHA domain-interacting nucleolar phosphoprotein">
    <location>
        <begin position="2"/>
        <end position="271"/>
    </location>
</feature>
<feature type="domain" description="RRM" evidence="3">
    <location>
        <begin position="44"/>
        <end position="122"/>
    </location>
</feature>
<feature type="region of interest" description="Disordered" evidence="4">
    <location>
        <begin position="1"/>
        <end position="20"/>
    </location>
</feature>
<feature type="region of interest" description="Disordered" evidence="4">
    <location>
        <begin position="242"/>
        <end position="271"/>
    </location>
</feature>
<feature type="compositionally biased region" description="Basic residues" evidence="4">
    <location>
        <begin position="261"/>
        <end position="271"/>
    </location>
</feature>
<feature type="modified residue" description="N-acetylalanine" evidence="2">
    <location>
        <position position="2"/>
    </location>
</feature>
<feature type="modified residue" description="Omega-N-methylarginine" evidence="2">
    <location>
        <position position="113"/>
    </location>
</feature>
<feature type="modified residue" description="Phosphothreonine" evidence="2">
    <location>
        <position position="213"/>
    </location>
</feature>
<feature type="modified residue" description="Phosphothreonine" evidence="2">
    <location>
        <position position="217"/>
    </location>
</feature>
<feature type="modified residue" description="Omega-N-methylated arginine" evidence="2">
    <location>
        <position position="223"/>
    </location>
</feature>
<feature type="modified residue" description="Omega-N-methylated arginine" evidence="2">
    <location>
        <position position="224"/>
    </location>
</feature>
<feature type="modified residue" description="Phosphoserine" evidence="2">
    <location>
        <position position="226"/>
    </location>
</feature>
<feature type="cross-link" description="Glycyl lysine isopeptide (Lys-Gly) (interchain with G-Cter in SUMO2)" evidence="2">
    <location>
        <position position="37"/>
    </location>
</feature>
<feature type="cross-link" description="Glycyl lysine isopeptide (Lys-Gly) (interchain with G-Cter in SUMO2)" evidence="2">
    <location>
        <position position="178"/>
    </location>
</feature>
<feature type="cross-link" description="Glycyl lysine isopeptide (Lys-Gly) (interchain with G-Cter in SUMO2)" evidence="2">
    <location>
        <position position="191"/>
    </location>
</feature>
<feature type="cross-link" description="Glycyl lysine isopeptide (Lys-Gly) (interchain with G-Cter in SUMO1); alternate" evidence="2">
    <location>
        <position position="247"/>
    </location>
</feature>
<feature type="cross-link" description="Glycyl lysine isopeptide (Lys-Gly) (interchain with G-Cter in SUMO2); alternate" evidence="2">
    <location>
        <position position="247"/>
    </location>
</feature>
<organism>
    <name type="scientific">Rattus norvegicus</name>
    <name type="common">Rat</name>
    <dbReference type="NCBI Taxonomy" id="10116"/>
    <lineage>
        <taxon>Eukaryota</taxon>
        <taxon>Metazoa</taxon>
        <taxon>Chordata</taxon>
        <taxon>Craniata</taxon>
        <taxon>Vertebrata</taxon>
        <taxon>Euteleostomi</taxon>
        <taxon>Mammalia</taxon>
        <taxon>Eutheria</taxon>
        <taxon>Euarchontoglires</taxon>
        <taxon>Glires</taxon>
        <taxon>Rodentia</taxon>
        <taxon>Myomorpha</taxon>
        <taxon>Muroidea</taxon>
        <taxon>Muridae</taxon>
        <taxon>Murinae</taxon>
        <taxon>Rattus</taxon>
    </lineage>
</organism>
<name>MK67I_RAT</name>
<sequence length="271" mass="31351">MAEYSGPAKPTLALNPREDSQFEKDLTQIQRRAKKKKEEKLNSGVVYLGHLPSTLSESHIYDYCAQFGDIRRFRLSRSKRTGNSRGFAFVEFESEDVAKIVAETMDNYLFGERLLSCKFMPREKVHKDLFNQCNVPFHPPSFPAVKRYNQKRGHLQMLKMEYRFKKKEKLLRKKLAKKGIDYSFPSLVLPKPKKEISSIANTHGDSEANQDPTPVCTPTFLERRKSQLMEINDDDEIILKLPVSPVKEDTQKTPAPESSGKKRLRKRKSKQ</sequence>
<protein>
    <recommendedName>
        <fullName>MKI67 FHA domain-interacting nucleolar phosphoprotein</fullName>
    </recommendedName>
    <alternativeName>
        <fullName>Nucleolar protein interacting with the FHA domain of pKI-67</fullName>
    </alternativeName>
</protein>
<reference key="1">
    <citation type="journal article" date="2004" name="Genome Res.">
        <title>The status, quality, and expansion of the NIH full-length cDNA project: the Mammalian Gene Collection (MGC).</title>
        <authorList>
            <consortium name="The MGC Project Team"/>
        </authorList>
    </citation>
    <scope>NUCLEOTIDE SEQUENCE [LARGE SCALE MRNA]</scope>
    <source>
        <tissue>Ovary</tissue>
    </source>
</reference>
<comment type="subunit">
    <text evidence="1">Binds to the FHA domain of MKI67; this interaction is enhanced in mitosis.</text>
</comment>
<comment type="subcellular location">
    <subcellularLocation>
        <location>Nucleus</location>
        <location>Nucleolus</location>
    </subcellularLocation>
    <subcellularLocation>
        <location evidence="1">Chromosome</location>
    </subcellularLocation>
    <text evidence="1">Localizes to mitotic chromosomes in conjunction with MKI67.</text>
</comment>
<comment type="PTM">
    <text evidence="1">Phosphorylated.</text>
</comment>
<accession>Q5RJM0</accession>
<dbReference type="EMBL" id="BC086585">
    <property type="protein sequence ID" value="AAH86585.1"/>
    <property type="molecule type" value="mRNA"/>
</dbReference>
<dbReference type="RefSeq" id="NP_631925.2">
    <property type="nucleotide sequence ID" value="NM_139186.2"/>
</dbReference>
<dbReference type="SMR" id="Q5RJM0"/>
<dbReference type="FunCoup" id="Q5RJM0">
    <property type="interactions" value="2963"/>
</dbReference>
<dbReference type="STRING" id="10116.ENSRNOP00000058336"/>
<dbReference type="iPTMnet" id="Q5RJM0"/>
<dbReference type="PhosphoSitePlus" id="Q5RJM0"/>
<dbReference type="PaxDb" id="10116-ENSRNOP00000058336"/>
<dbReference type="GeneID" id="246042"/>
<dbReference type="KEGG" id="rno:246042"/>
<dbReference type="AGR" id="RGD:708462"/>
<dbReference type="CTD" id="84365"/>
<dbReference type="RGD" id="708462">
    <property type="gene designation" value="Nifk"/>
</dbReference>
<dbReference type="VEuPathDB" id="HostDB:ENSRNOG00000025701"/>
<dbReference type="eggNOG" id="KOG4208">
    <property type="taxonomic scope" value="Eukaryota"/>
</dbReference>
<dbReference type="HOGENOM" id="CLU_025741_1_0_1"/>
<dbReference type="InParanoid" id="Q5RJM0"/>
<dbReference type="OrthoDB" id="21467at2759"/>
<dbReference type="PhylomeDB" id="Q5RJM0"/>
<dbReference type="TreeFam" id="TF315137"/>
<dbReference type="PRO" id="PR:Q5RJM0"/>
<dbReference type="Proteomes" id="UP000002494">
    <property type="component" value="Chromosome 13"/>
</dbReference>
<dbReference type="Bgee" id="ENSRNOG00000025701">
    <property type="expression patterns" value="Expressed in thymus and 20 other cell types or tissues"/>
</dbReference>
<dbReference type="ExpressionAtlas" id="Q5RJM0">
    <property type="expression patterns" value="baseline and differential"/>
</dbReference>
<dbReference type="GO" id="GO:0000794">
    <property type="term" value="C:condensed nuclear chromosome"/>
    <property type="evidence" value="ECO:0000266"/>
    <property type="project" value="RGD"/>
</dbReference>
<dbReference type="GO" id="GO:0005737">
    <property type="term" value="C:cytoplasm"/>
    <property type="evidence" value="ECO:0000266"/>
    <property type="project" value="RGD"/>
</dbReference>
<dbReference type="GO" id="GO:0005730">
    <property type="term" value="C:nucleolus"/>
    <property type="evidence" value="ECO:0000318"/>
    <property type="project" value="GO_Central"/>
</dbReference>
<dbReference type="GO" id="GO:0003723">
    <property type="term" value="F:RNA binding"/>
    <property type="evidence" value="ECO:0000266"/>
    <property type="project" value="RGD"/>
</dbReference>
<dbReference type="CDD" id="cd12307">
    <property type="entry name" value="RRM_NIFK_like"/>
    <property type="match status" value="1"/>
</dbReference>
<dbReference type="Gene3D" id="3.30.70.330">
    <property type="match status" value="1"/>
</dbReference>
<dbReference type="InterPro" id="IPR021043">
    <property type="entry name" value="NIFK_FHA_Ki67-binding"/>
</dbReference>
<dbReference type="InterPro" id="IPR012677">
    <property type="entry name" value="Nucleotide-bd_a/b_plait_sf"/>
</dbReference>
<dbReference type="InterPro" id="IPR035979">
    <property type="entry name" value="RBD_domain_sf"/>
</dbReference>
<dbReference type="InterPro" id="IPR000504">
    <property type="entry name" value="RRM_dom"/>
</dbReference>
<dbReference type="PANTHER" id="PTHR46754">
    <property type="entry name" value="MKI67 FHA DOMAIN-INTERACTING NUCLEOLAR PHOSPHOPROTEIN"/>
    <property type="match status" value="1"/>
</dbReference>
<dbReference type="Pfam" id="PF12196">
    <property type="entry name" value="hNIFK_binding"/>
    <property type="match status" value="1"/>
</dbReference>
<dbReference type="Pfam" id="PF00076">
    <property type="entry name" value="RRM_1"/>
    <property type="match status" value="1"/>
</dbReference>
<dbReference type="SMART" id="SM00360">
    <property type="entry name" value="RRM"/>
    <property type="match status" value="1"/>
</dbReference>
<dbReference type="SUPFAM" id="SSF54928">
    <property type="entry name" value="RNA-binding domain, RBD"/>
    <property type="match status" value="1"/>
</dbReference>
<dbReference type="PROSITE" id="PS50102">
    <property type="entry name" value="RRM"/>
    <property type="match status" value="1"/>
</dbReference>
<gene>
    <name type="primary">Nifk</name>
    <name type="synonym">Mki67ip</name>
</gene>
<proteinExistence type="evidence at transcript level"/>
<evidence type="ECO:0000250" key="1"/>
<evidence type="ECO:0000250" key="2">
    <source>
        <dbReference type="UniProtKB" id="Q9BYG3"/>
    </source>
</evidence>
<evidence type="ECO:0000255" key="3">
    <source>
        <dbReference type="PROSITE-ProRule" id="PRU00176"/>
    </source>
</evidence>
<evidence type="ECO:0000256" key="4">
    <source>
        <dbReference type="SAM" id="MobiDB-lite"/>
    </source>
</evidence>
<keyword id="KW-0007">Acetylation</keyword>
<keyword id="KW-0158">Chromosome</keyword>
<keyword id="KW-1017">Isopeptide bond</keyword>
<keyword id="KW-0488">Methylation</keyword>
<keyword id="KW-0539">Nucleus</keyword>
<keyword id="KW-0597">Phosphoprotein</keyword>
<keyword id="KW-1185">Reference proteome</keyword>
<keyword id="KW-0694">RNA-binding</keyword>
<keyword id="KW-0832">Ubl conjugation</keyword>